<proteinExistence type="evidence at transcript level"/>
<dbReference type="EC" id="3.1.1.4"/>
<dbReference type="EMBL" id="AF253048">
    <property type="protein sequence ID" value="AAK49821.1"/>
    <property type="molecule type" value="Genomic_DNA"/>
</dbReference>
<dbReference type="EMBL" id="AJ580169">
    <property type="protein sequence ID" value="CAE47174.1"/>
    <property type="molecule type" value="mRNA"/>
</dbReference>
<dbReference type="EMBL" id="AJ580170">
    <property type="protein sequence ID" value="CAE47175.1"/>
    <property type="molecule type" value="mRNA"/>
</dbReference>
<dbReference type="EMBL" id="AJ580172">
    <property type="protein sequence ID" value="CAE47177.1"/>
    <property type="molecule type" value="mRNA"/>
</dbReference>
<dbReference type="EMBL" id="AJ580173">
    <property type="protein sequence ID" value="CAE47178.1"/>
    <property type="molecule type" value="mRNA"/>
</dbReference>
<dbReference type="SMR" id="Q910A1"/>
<dbReference type="GO" id="GO:0005576">
    <property type="term" value="C:extracellular region"/>
    <property type="evidence" value="ECO:0007669"/>
    <property type="project" value="UniProtKB-SubCell"/>
</dbReference>
<dbReference type="GO" id="GO:0005509">
    <property type="term" value="F:calcium ion binding"/>
    <property type="evidence" value="ECO:0007669"/>
    <property type="project" value="InterPro"/>
</dbReference>
<dbReference type="GO" id="GO:0047498">
    <property type="term" value="F:calcium-dependent phospholipase A2 activity"/>
    <property type="evidence" value="ECO:0007669"/>
    <property type="project" value="TreeGrafter"/>
</dbReference>
<dbReference type="GO" id="GO:0005543">
    <property type="term" value="F:phospholipid binding"/>
    <property type="evidence" value="ECO:0007669"/>
    <property type="project" value="TreeGrafter"/>
</dbReference>
<dbReference type="GO" id="GO:0050482">
    <property type="term" value="P:arachidonate secretion"/>
    <property type="evidence" value="ECO:0007669"/>
    <property type="project" value="InterPro"/>
</dbReference>
<dbReference type="GO" id="GO:0016042">
    <property type="term" value="P:lipid catabolic process"/>
    <property type="evidence" value="ECO:0007669"/>
    <property type="project" value="UniProtKB-KW"/>
</dbReference>
<dbReference type="GO" id="GO:0006644">
    <property type="term" value="P:phospholipid metabolic process"/>
    <property type="evidence" value="ECO:0007669"/>
    <property type="project" value="InterPro"/>
</dbReference>
<dbReference type="CDD" id="cd00125">
    <property type="entry name" value="PLA2c"/>
    <property type="match status" value="1"/>
</dbReference>
<dbReference type="FunFam" id="1.20.90.10:FF:000001">
    <property type="entry name" value="Basic phospholipase A2 homolog"/>
    <property type="match status" value="1"/>
</dbReference>
<dbReference type="Gene3D" id="1.20.90.10">
    <property type="entry name" value="Phospholipase A2 domain"/>
    <property type="match status" value="1"/>
</dbReference>
<dbReference type="InterPro" id="IPR001211">
    <property type="entry name" value="PLipase_A2"/>
</dbReference>
<dbReference type="InterPro" id="IPR033112">
    <property type="entry name" value="PLipase_A2_Asp_AS"/>
</dbReference>
<dbReference type="InterPro" id="IPR016090">
    <property type="entry name" value="PLipase_A2_dom"/>
</dbReference>
<dbReference type="InterPro" id="IPR036444">
    <property type="entry name" value="PLipase_A2_dom_sf"/>
</dbReference>
<dbReference type="InterPro" id="IPR033113">
    <property type="entry name" value="PLipase_A2_His_AS"/>
</dbReference>
<dbReference type="PANTHER" id="PTHR11716:SF101">
    <property type="entry name" value="BASIC PHOSPHOLIPASE A2 PA-11-LIKE"/>
    <property type="match status" value="1"/>
</dbReference>
<dbReference type="PANTHER" id="PTHR11716">
    <property type="entry name" value="PHOSPHOLIPASE A2 FAMILY MEMBER"/>
    <property type="match status" value="1"/>
</dbReference>
<dbReference type="Pfam" id="PF00068">
    <property type="entry name" value="Phospholip_A2_1"/>
    <property type="match status" value="1"/>
</dbReference>
<dbReference type="PRINTS" id="PR00389">
    <property type="entry name" value="PHPHLIPASEA2"/>
</dbReference>
<dbReference type="SMART" id="SM00085">
    <property type="entry name" value="PA2c"/>
    <property type="match status" value="1"/>
</dbReference>
<dbReference type="SUPFAM" id="SSF48619">
    <property type="entry name" value="Phospholipase A2, PLA2"/>
    <property type="match status" value="1"/>
</dbReference>
<dbReference type="PROSITE" id="PS00119">
    <property type="entry name" value="PA2_ASP"/>
    <property type="match status" value="1"/>
</dbReference>
<dbReference type="PROSITE" id="PS00118">
    <property type="entry name" value="PA2_HIS"/>
    <property type="match status" value="1"/>
</dbReference>
<organism>
    <name type="scientific">Vipera ammodytes ammodytes</name>
    <name type="common">Western sand viper</name>
    <dbReference type="NCBI Taxonomy" id="8705"/>
    <lineage>
        <taxon>Eukaryota</taxon>
        <taxon>Metazoa</taxon>
        <taxon>Chordata</taxon>
        <taxon>Craniata</taxon>
        <taxon>Vertebrata</taxon>
        <taxon>Euteleostomi</taxon>
        <taxon>Lepidosauria</taxon>
        <taxon>Squamata</taxon>
        <taxon>Bifurcata</taxon>
        <taxon>Unidentata</taxon>
        <taxon>Episquamata</taxon>
        <taxon>Toxicofera</taxon>
        <taxon>Serpentes</taxon>
        <taxon>Colubroidea</taxon>
        <taxon>Viperidae</taxon>
        <taxon>Viperinae</taxon>
        <taxon>Vipera</taxon>
    </lineage>
</organism>
<feature type="signal peptide" evidence="1">
    <location>
        <begin position="1"/>
        <end position="16"/>
    </location>
</feature>
<feature type="chain" id="PRO_0000022975" description="Acidic phospholipase A2 ammodytin I1">
    <location>
        <begin position="17"/>
        <end position="138"/>
    </location>
</feature>
<feature type="active site" evidence="1">
    <location>
        <position position="63"/>
    </location>
</feature>
<feature type="active site" evidence="1">
    <location>
        <position position="105"/>
    </location>
</feature>
<feature type="binding site" evidence="1">
    <location>
        <position position="43"/>
    </location>
    <ligand>
        <name>Ca(2+)</name>
        <dbReference type="ChEBI" id="CHEBI:29108"/>
    </ligand>
</feature>
<feature type="binding site" evidence="1">
    <location>
        <position position="45"/>
    </location>
    <ligand>
        <name>Ca(2+)</name>
        <dbReference type="ChEBI" id="CHEBI:29108"/>
    </ligand>
</feature>
<feature type="binding site" evidence="1">
    <location>
        <position position="47"/>
    </location>
    <ligand>
        <name>Ca(2+)</name>
        <dbReference type="ChEBI" id="CHEBI:29108"/>
    </ligand>
</feature>
<feature type="binding site" evidence="1">
    <location>
        <position position="64"/>
    </location>
    <ligand>
        <name>Ca(2+)</name>
        <dbReference type="ChEBI" id="CHEBI:29108"/>
    </ligand>
</feature>
<feature type="disulfide bond" evidence="1">
    <location>
        <begin position="42"/>
        <end position="131"/>
    </location>
</feature>
<feature type="disulfide bond" evidence="1">
    <location>
        <begin position="44"/>
        <end position="60"/>
    </location>
</feature>
<feature type="disulfide bond" evidence="1">
    <location>
        <begin position="59"/>
        <end position="111"/>
    </location>
</feature>
<feature type="disulfide bond" evidence="1">
    <location>
        <begin position="65"/>
        <end position="138"/>
    </location>
</feature>
<feature type="disulfide bond" evidence="1">
    <location>
        <begin position="66"/>
        <end position="104"/>
    </location>
</feature>
<feature type="disulfide bond" evidence="1">
    <location>
        <begin position="73"/>
        <end position="97"/>
    </location>
</feature>
<feature type="disulfide bond" evidence="1">
    <location>
        <begin position="91"/>
        <end position="102"/>
    </location>
</feature>
<reference key="1">
    <citation type="submission" date="2000-04" db="EMBL/GenBank/DDBJ databases">
        <title>Evolutionary relationships of Viperidae phospholipase A2 genes inferred from intron sequences.</title>
        <authorList>
            <person name="Kordis D."/>
            <person name="Gubensek F."/>
        </authorList>
    </citation>
    <scope>NUCLEOTIDE SEQUENCE [GENOMIC DNA]</scope>
</reference>
<reference key="2">
    <citation type="journal article" date="2007" name="Toxicon">
        <title>Phospholipase A2 diversity and polymorphism in European viper venoms: paradoxical molecular evolution in Viperinae.</title>
        <authorList>
            <person name="Jan V.M."/>
            <person name="Guillemin I."/>
            <person name="Robbe-Vincent A."/>
            <person name="Choumet V."/>
        </authorList>
    </citation>
    <scope>NUCLEOTIDE SEQUENCE [MRNA]</scope>
    <source>
        <tissue>Venom gland</tissue>
    </source>
</reference>
<accession>Q910A1</accession>
<accession>Q6A3H0</accession>
<protein>
    <recommendedName>
        <fullName evidence="5">Acidic phospholipase A2 ammodytin I1</fullName>
        <shortName evidence="5">AmI1</shortName>
        <shortName>AmdI1</shortName>
        <shortName evidence="2">AtnI1</shortName>
        <shortName>svPLA2</shortName>
        <ecNumber>3.1.1.4</ecNumber>
    </recommendedName>
    <alternativeName>
        <fullName>Phosphatidylcholine 2-acylhydrolase</fullName>
    </alternativeName>
</protein>
<name>PA2A1_VIPAA</name>
<sequence length="138" mass="15435">MRILWIVAVCLIGAEGHLSQFGDMINKKTGIFGIMSYIYYGCYCGWGGKGKPLDATDRCCFVHDCCYGRVNGCDPKMGTYSYSFQNGDIVCGGDDPCLRAVCECDRVAAICFGENMNTYDKKYMLYSLFDCKEESEQC</sequence>
<keyword id="KW-0106">Calcium</keyword>
<keyword id="KW-1015">Disulfide bond</keyword>
<keyword id="KW-0378">Hydrolase</keyword>
<keyword id="KW-0442">Lipid degradation</keyword>
<keyword id="KW-0443">Lipid metabolism</keyword>
<keyword id="KW-0479">Metal-binding</keyword>
<keyword id="KW-0964">Secreted</keyword>
<keyword id="KW-0732">Signal</keyword>
<evidence type="ECO:0000250" key="1"/>
<evidence type="ECO:0000250" key="2">
    <source>
        <dbReference type="UniProtKB" id="P34180"/>
    </source>
</evidence>
<evidence type="ECO:0000255" key="3">
    <source>
        <dbReference type="PROSITE-ProRule" id="PRU10035"/>
    </source>
</evidence>
<evidence type="ECO:0000255" key="4">
    <source>
        <dbReference type="PROSITE-ProRule" id="PRU10036"/>
    </source>
</evidence>
<evidence type="ECO:0000303" key="5">
    <source>
    </source>
</evidence>
<evidence type="ECO:0000305" key="6"/>
<evidence type="ECO:0000305" key="7">
    <source>
    </source>
</evidence>
<comment type="function">
    <text evidence="1">Snake venom phospholipase A2 (PLA2) that has enzymatic activity but is non-toxic. PLA2 catalyzes the calcium-dependent hydrolysis of the 2-acyl groups in 3-sn-phosphoglycerides (By similarity).</text>
</comment>
<comment type="catalytic activity">
    <reaction evidence="3 4">
        <text>a 1,2-diacyl-sn-glycero-3-phosphocholine + H2O = a 1-acyl-sn-glycero-3-phosphocholine + a fatty acid + H(+)</text>
        <dbReference type="Rhea" id="RHEA:15801"/>
        <dbReference type="ChEBI" id="CHEBI:15377"/>
        <dbReference type="ChEBI" id="CHEBI:15378"/>
        <dbReference type="ChEBI" id="CHEBI:28868"/>
        <dbReference type="ChEBI" id="CHEBI:57643"/>
        <dbReference type="ChEBI" id="CHEBI:58168"/>
        <dbReference type="EC" id="3.1.1.4"/>
    </reaction>
</comment>
<comment type="cofactor">
    <cofactor evidence="1">
        <name>Ca(2+)</name>
        <dbReference type="ChEBI" id="CHEBI:29108"/>
    </cofactor>
    <text evidence="1">Binds 1 Ca(2+) ion.</text>
</comment>
<comment type="subcellular location">
    <subcellularLocation>
        <location evidence="7">Secreted</location>
    </subcellularLocation>
</comment>
<comment type="tissue specificity">
    <text evidence="7">Expressed by the venom gland.</text>
</comment>
<comment type="similarity">
    <text evidence="6">Belongs to the phospholipase A2 family. Group II subfamily. D49 sub-subfamily.</text>
</comment>